<proteinExistence type="inferred from homology"/>
<keyword id="KW-0378">Hydrolase</keyword>
<keyword id="KW-1185">Reference proteome</keyword>
<comment type="similarity">
    <text evidence="1">Belongs to the dGTPase family. Type 3 subfamily.</text>
</comment>
<sequence length="465" mass="53485">MKWDKLLNDKRRRESGVTRSKNTDVRSAFENDFQRIVMSASFRRLQDKTQVFPLEKSDFVRTRLTHSMEVSTIAKSMGNMVTHTIQEENLDQDFTKDHAEKIPEILACAGLLHDMGNPPFGHFGEESIREWFRDNLATITYKNKSLAEILTPQMKEDFYYFEGNAQVLRVVSKLHYLFDQYGLNLTFATLNAVIKYPVSSLKVNKKQIKSKKLGYFYADESLFNEITTATEALDNRHPLTYLLEVADDIAYLNADLEDGVKKGIVNITQILKGFEEVEEHNKVTAACYNELKKKSERYEGQEESFIVQQWLASNVRGQLINRSLEVFYENYDAIMAGTFNDSLIDASSAEQLVQILQSLSFTYIYQDKGIVESEIAGNEIISKLLETFIPAVIYYDSETPERQTAKDKRLLTLISDNYLGCYRKNAEGESETMKLYLRLLLVTDFICGMTDSYAKDLYQRLNGLS</sequence>
<dbReference type="EMBL" id="AL591984">
    <property type="protein sequence ID" value="CAD00870.1"/>
    <property type="molecule type" value="Genomic_DNA"/>
</dbReference>
<dbReference type="PIR" id="AH1406">
    <property type="entry name" value="AH1406"/>
</dbReference>
<dbReference type="RefSeq" id="NP_466179.1">
    <property type="nucleotide sequence ID" value="NC_003210.1"/>
</dbReference>
<dbReference type="RefSeq" id="WP_003722014.1">
    <property type="nucleotide sequence ID" value="NZ_CP149495.1"/>
</dbReference>
<dbReference type="SMR" id="Q8Y420"/>
<dbReference type="STRING" id="169963.gene:17595374"/>
<dbReference type="PaxDb" id="169963-lmo2657"/>
<dbReference type="EnsemblBacteria" id="CAD00870">
    <property type="protein sequence ID" value="CAD00870"/>
    <property type="gene ID" value="CAD00870"/>
</dbReference>
<dbReference type="GeneID" id="985613"/>
<dbReference type="KEGG" id="lmo:lmo2657"/>
<dbReference type="PATRIC" id="fig|169963.11.peg.2723"/>
<dbReference type="eggNOG" id="COG0232">
    <property type="taxonomic scope" value="Bacteria"/>
</dbReference>
<dbReference type="HOGENOM" id="CLU_028163_2_0_9"/>
<dbReference type="OrthoDB" id="9803619at2"/>
<dbReference type="PhylomeDB" id="Q8Y420"/>
<dbReference type="BioCyc" id="LMON169963:LMO2657-MONOMER"/>
<dbReference type="Proteomes" id="UP000000817">
    <property type="component" value="Chromosome"/>
</dbReference>
<dbReference type="GO" id="GO:0008832">
    <property type="term" value="F:dGTPase activity"/>
    <property type="evidence" value="ECO:0000318"/>
    <property type="project" value="GO_Central"/>
</dbReference>
<dbReference type="GO" id="GO:0006203">
    <property type="term" value="P:dGTP catabolic process"/>
    <property type="evidence" value="ECO:0000318"/>
    <property type="project" value="GO_Central"/>
</dbReference>
<dbReference type="CDD" id="cd00077">
    <property type="entry name" value="HDc"/>
    <property type="match status" value="1"/>
</dbReference>
<dbReference type="Gene3D" id="1.10.3550.10">
    <property type="entry name" value="eoxyguanosinetriphosphate triphosphohydrolase domain-like"/>
    <property type="match status" value="1"/>
</dbReference>
<dbReference type="Gene3D" id="1.10.3210.10">
    <property type="entry name" value="Hypothetical protein af1432"/>
    <property type="match status" value="1"/>
</dbReference>
<dbReference type="Gene3D" id="1.10.3410.10">
    <property type="entry name" value="putative deoxyguanosinetriphosphate triphosphohydrolase like domain"/>
    <property type="match status" value="1"/>
</dbReference>
<dbReference type="HAMAP" id="MF_01213">
    <property type="entry name" value="dGTPase_type3"/>
    <property type="match status" value="1"/>
</dbReference>
<dbReference type="InterPro" id="IPR023293">
    <property type="entry name" value="dGTP_triP_hydro_central_sf"/>
</dbReference>
<dbReference type="InterPro" id="IPR027432">
    <property type="entry name" value="dGTP_triphosphohydrolase_C"/>
</dbReference>
<dbReference type="InterPro" id="IPR006261">
    <property type="entry name" value="dGTPase"/>
</dbReference>
<dbReference type="InterPro" id="IPR050135">
    <property type="entry name" value="dGTPase-like"/>
</dbReference>
<dbReference type="InterPro" id="IPR023024">
    <property type="entry name" value="dNTPase_3"/>
</dbReference>
<dbReference type="InterPro" id="IPR003607">
    <property type="entry name" value="HD/PDEase_dom"/>
</dbReference>
<dbReference type="InterPro" id="IPR006674">
    <property type="entry name" value="HD_domain"/>
</dbReference>
<dbReference type="NCBIfam" id="TIGR01353">
    <property type="entry name" value="dGTP_triPase"/>
    <property type="match status" value="1"/>
</dbReference>
<dbReference type="NCBIfam" id="NF002205">
    <property type="entry name" value="PRK01096.1"/>
    <property type="match status" value="1"/>
</dbReference>
<dbReference type="PANTHER" id="PTHR11373:SF32">
    <property type="entry name" value="DEOXYGUANOSINETRIPHOSPHATE TRIPHOSPHOHYDROLASE"/>
    <property type="match status" value="1"/>
</dbReference>
<dbReference type="PANTHER" id="PTHR11373">
    <property type="entry name" value="DEOXYNUCLEOSIDE TRIPHOSPHATE TRIPHOSPHOHYDROLASE"/>
    <property type="match status" value="1"/>
</dbReference>
<dbReference type="Pfam" id="PF01966">
    <property type="entry name" value="HD"/>
    <property type="match status" value="1"/>
</dbReference>
<dbReference type="SMART" id="SM00471">
    <property type="entry name" value="HDc"/>
    <property type="match status" value="1"/>
</dbReference>
<dbReference type="SUPFAM" id="SSF109604">
    <property type="entry name" value="HD-domain/PDEase-like"/>
    <property type="match status" value="1"/>
</dbReference>
<dbReference type="PROSITE" id="PS51831">
    <property type="entry name" value="HD"/>
    <property type="match status" value="1"/>
</dbReference>
<reference key="1">
    <citation type="journal article" date="2001" name="Science">
        <title>Comparative genomics of Listeria species.</title>
        <authorList>
            <person name="Glaser P."/>
            <person name="Frangeul L."/>
            <person name="Buchrieser C."/>
            <person name="Rusniok C."/>
            <person name="Amend A."/>
            <person name="Baquero F."/>
            <person name="Berche P."/>
            <person name="Bloecker H."/>
            <person name="Brandt P."/>
            <person name="Chakraborty T."/>
            <person name="Charbit A."/>
            <person name="Chetouani F."/>
            <person name="Couve E."/>
            <person name="de Daruvar A."/>
            <person name="Dehoux P."/>
            <person name="Domann E."/>
            <person name="Dominguez-Bernal G."/>
            <person name="Duchaud E."/>
            <person name="Durant L."/>
            <person name="Dussurget O."/>
            <person name="Entian K.-D."/>
            <person name="Fsihi H."/>
            <person name="Garcia-del Portillo F."/>
            <person name="Garrido P."/>
            <person name="Gautier L."/>
            <person name="Goebel W."/>
            <person name="Gomez-Lopez N."/>
            <person name="Hain T."/>
            <person name="Hauf J."/>
            <person name="Jackson D."/>
            <person name="Jones L.-M."/>
            <person name="Kaerst U."/>
            <person name="Kreft J."/>
            <person name="Kuhn M."/>
            <person name="Kunst F."/>
            <person name="Kurapkat G."/>
            <person name="Madueno E."/>
            <person name="Maitournam A."/>
            <person name="Mata Vicente J."/>
            <person name="Ng E."/>
            <person name="Nedjari H."/>
            <person name="Nordsiek G."/>
            <person name="Novella S."/>
            <person name="de Pablos B."/>
            <person name="Perez-Diaz J.-C."/>
            <person name="Purcell R."/>
            <person name="Remmel B."/>
            <person name="Rose M."/>
            <person name="Schlueter T."/>
            <person name="Simoes N."/>
            <person name="Tierrez A."/>
            <person name="Vazquez-Boland J.-A."/>
            <person name="Voss H."/>
            <person name="Wehland J."/>
            <person name="Cossart P."/>
        </authorList>
    </citation>
    <scope>NUCLEOTIDE SEQUENCE [LARGE SCALE GENOMIC DNA]</scope>
    <source>
        <strain>ATCC BAA-679 / EGD-e</strain>
    </source>
</reference>
<evidence type="ECO:0000255" key="1">
    <source>
        <dbReference type="HAMAP-Rule" id="MF_01213"/>
    </source>
</evidence>
<evidence type="ECO:0000255" key="2">
    <source>
        <dbReference type="PROSITE-ProRule" id="PRU01175"/>
    </source>
</evidence>
<evidence type="ECO:0000256" key="3">
    <source>
        <dbReference type="SAM" id="MobiDB-lite"/>
    </source>
</evidence>
<accession>Q8Y420</accession>
<gene>
    <name type="ordered locus">lmo2657</name>
</gene>
<protein>
    <recommendedName>
        <fullName evidence="1">Deoxyguanosinetriphosphate triphosphohydrolase-like protein</fullName>
    </recommendedName>
</protein>
<name>DGTL2_LISMO</name>
<feature type="chain" id="PRO_0000205331" description="Deoxyguanosinetriphosphate triphosphohydrolase-like protein">
    <location>
        <begin position="1"/>
        <end position="465"/>
    </location>
</feature>
<feature type="domain" description="HD" evidence="2">
    <location>
        <begin position="63"/>
        <end position="252"/>
    </location>
</feature>
<feature type="region of interest" description="Disordered" evidence="3">
    <location>
        <begin position="1"/>
        <end position="22"/>
    </location>
</feature>
<organism>
    <name type="scientific">Listeria monocytogenes serovar 1/2a (strain ATCC BAA-679 / EGD-e)</name>
    <dbReference type="NCBI Taxonomy" id="169963"/>
    <lineage>
        <taxon>Bacteria</taxon>
        <taxon>Bacillati</taxon>
        <taxon>Bacillota</taxon>
        <taxon>Bacilli</taxon>
        <taxon>Bacillales</taxon>
        <taxon>Listeriaceae</taxon>
        <taxon>Listeria</taxon>
    </lineage>
</organism>